<dbReference type="EC" id="2.3.1.234" evidence="1"/>
<dbReference type="EMBL" id="CP000237">
    <property type="protein sequence ID" value="ABD46386.1"/>
    <property type="molecule type" value="Genomic_DNA"/>
</dbReference>
<dbReference type="RefSeq" id="WP_011451636.1">
    <property type="nucleotide sequence ID" value="NC_007798.1"/>
</dbReference>
<dbReference type="SMR" id="Q2GEG6"/>
<dbReference type="STRING" id="222891.NSE_0236"/>
<dbReference type="KEGG" id="nse:NSE_0236"/>
<dbReference type="eggNOG" id="COG0533">
    <property type="taxonomic scope" value="Bacteria"/>
</dbReference>
<dbReference type="HOGENOM" id="CLU_023208_0_2_5"/>
<dbReference type="OrthoDB" id="9806197at2"/>
<dbReference type="Proteomes" id="UP000001942">
    <property type="component" value="Chromosome"/>
</dbReference>
<dbReference type="GO" id="GO:0005737">
    <property type="term" value="C:cytoplasm"/>
    <property type="evidence" value="ECO:0007669"/>
    <property type="project" value="UniProtKB-SubCell"/>
</dbReference>
<dbReference type="GO" id="GO:0005506">
    <property type="term" value="F:iron ion binding"/>
    <property type="evidence" value="ECO:0007669"/>
    <property type="project" value="UniProtKB-UniRule"/>
</dbReference>
<dbReference type="GO" id="GO:0061711">
    <property type="term" value="F:N(6)-L-threonylcarbamoyladenine synthase activity"/>
    <property type="evidence" value="ECO:0007669"/>
    <property type="project" value="UniProtKB-EC"/>
</dbReference>
<dbReference type="GO" id="GO:0002949">
    <property type="term" value="P:tRNA threonylcarbamoyladenosine modification"/>
    <property type="evidence" value="ECO:0007669"/>
    <property type="project" value="UniProtKB-UniRule"/>
</dbReference>
<dbReference type="CDD" id="cd24133">
    <property type="entry name" value="ASKHA_NBD_TsaD_bac"/>
    <property type="match status" value="1"/>
</dbReference>
<dbReference type="Gene3D" id="3.30.420.40">
    <property type="match status" value="2"/>
</dbReference>
<dbReference type="HAMAP" id="MF_01445">
    <property type="entry name" value="TsaD"/>
    <property type="match status" value="1"/>
</dbReference>
<dbReference type="InterPro" id="IPR043129">
    <property type="entry name" value="ATPase_NBD"/>
</dbReference>
<dbReference type="InterPro" id="IPR000905">
    <property type="entry name" value="Gcp-like_dom"/>
</dbReference>
<dbReference type="InterPro" id="IPR017861">
    <property type="entry name" value="KAE1/TsaD"/>
</dbReference>
<dbReference type="InterPro" id="IPR017860">
    <property type="entry name" value="Peptidase_M22_CS"/>
</dbReference>
<dbReference type="InterPro" id="IPR022450">
    <property type="entry name" value="TsaD"/>
</dbReference>
<dbReference type="NCBIfam" id="TIGR00329">
    <property type="entry name" value="gcp_kae1"/>
    <property type="match status" value="1"/>
</dbReference>
<dbReference type="NCBIfam" id="TIGR03723">
    <property type="entry name" value="T6A_TsaD_YgjD"/>
    <property type="match status" value="1"/>
</dbReference>
<dbReference type="PANTHER" id="PTHR11735">
    <property type="entry name" value="TRNA N6-ADENOSINE THREONYLCARBAMOYLTRANSFERASE"/>
    <property type="match status" value="1"/>
</dbReference>
<dbReference type="PANTHER" id="PTHR11735:SF6">
    <property type="entry name" value="TRNA N6-ADENOSINE THREONYLCARBAMOYLTRANSFERASE, MITOCHONDRIAL"/>
    <property type="match status" value="1"/>
</dbReference>
<dbReference type="Pfam" id="PF00814">
    <property type="entry name" value="TsaD"/>
    <property type="match status" value="1"/>
</dbReference>
<dbReference type="PRINTS" id="PR00789">
    <property type="entry name" value="OSIALOPTASE"/>
</dbReference>
<dbReference type="SUPFAM" id="SSF53067">
    <property type="entry name" value="Actin-like ATPase domain"/>
    <property type="match status" value="2"/>
</dbReference>
<dbReference type="PROSITE" id="PS01016">
    <property type="entry name" value="GLYCOPROTEASE"/>
    <property type="match status" value="1"/>
</dbReference>
<accession>Q2GEG6</accession>
<evidence type="ECO:0000255" key="1">
    <source>
        <dbReference type="HAMAP-Rule" id="MF_01445"/>
    </source>
</evidence>
<gene>
    <name evidence="1" type="primary">tsaD</name>
    <name type="synonym">gcp</name>
    <name type="ordered locus">NSE_0236</name>
</gene>
<comment type="function">
    <text evidence="1">Required for the formation of a threonylcarbamoyl group on adenosine at position 37 (t(6)A37) in tRNAs that read codons beginning with adenine. Is involved in the transfer of the threonylcarbamoyl moiety of threonylcarbamoyl-AMP (TC-AMP) to the N6 group of A37, together with TsaE and TsaB. TsaD likely plays a direct catalytic role in this reaction.</text>
</comment>
<comment type="catalytic activity">
    <reaction evidence="1">
        <text>L-threonylcarbamoyladenylate + adenosine(37) in tRNA = N(6)-L-threonylcarbamoyladenosine(37) in tRNA + AMP + H(+)</text>
        <dbReference type="Rhea" id="RHEA:37059"/>
        <dbReference type="Rhea" id="RHEA-COMP:10162"/>
        <dbReference type="Rhea" id="RHEA-COMP:10163"/>
        <dbReference type="ChEBI" id="CHEBI:15378"/>
        <dbReference type="ChEBI" id="CHEBI:73682"/>
        <dbReference type="ChEBI" id="CHEBI:74411"/>
        <dbReference type="ChEBI" id="CHEBI:74418"/>
        <dbReference type="ChEBI" id="CHEBI:456215"/>
        <dbReference type="EC" id="2.3.1.234"/>
    </reaction>
</comment>
<comment type="cofactor">
    <cofactor evidence="1">
        <name>Fe(2+)</name>
        <dbReference type="ChEBI" id="CHEBI:29033"/>
    </cofactor>
    <text evidence="1">Binds 1 Fe(2+) ion per subunit.</text>
</comment>
<comment type="subcellular location">
    <subcellularLocation>
        <location evidence="1">Cytoplasm</location>
    </subcellularLocation>
</comment>
<comment type="similarity">
    <text evidence="1">Belongs to the KAE1 / TsaD family.</text>
</comment>
<sequence>MNNHLILGVETSCDETSVAIVSEEGEVCFHEIFTQDHSKYNGVYPEFASREHLKILPQILRRAVQAHDLEKLTAIACTVGPGLVGSLIVGVMMARGLAFSLKKPVFGVNHLEGHLLAVRLVEKINFPFVCLVISGGHSQLIDARGIGDYVLLGETLDDAFGEAFDKLATMLGFTYPGGKTVEKLAIKGDSERFRLPAAMINQSGCNFSLSGIKTALKKIITSLPQITEKDKADICASFQACVARIMVNKLEQAVKICGHSRIVLAGGVGSNRYIRETLEEFAKNHNLSLHFPEGILCTDNAAMIAWAAIERLKAGCTELSLEPQPRLCW</sequence>
<organism>
    <name type="scientific">Neorickettsia sennetsu (strain ATCC VR-367 / Miyayama)</name>
    <name type="common">Ehrlichia sennetsu</name>
    <dbReference type="NCBI Taxonomy" id="222891"/>
    <lineage>
        <taxon>Bacteria</taxon>
        <taxon>Pseudomonadati</taxon>
        <taxon>Pseudomonadota</taxon>
        <taxon>Alphaproteobacteria</taxon>
        <taxon>Rickettsiales</taxon>
        <taxon>Anaplasmataceae</taxon>
        <taxon>Neorickettsia</taxon>
    </lineage>
</organism>
<feature type="chain" id="PRO_0000303452" description="tRNA N6-adenosine threonylcarbamoyltransferase">
    <location>
        <begin position="1"/>
        <end position="329"/>
    </location>
</feature>
<feature type="binding site" evidence="1">
    <location>
        <position position="110"/>
    </location>
    <ligand>
        <name>Fe cation</name>
        <dbReference type="ChEBI" id="CHEBI:24875"/>
    </ligand>
</feature>
<feature type="binding site" evidence="1">
    <location>
        <position position="114"/>
    </location>
    <ligand>
        <name>Fe cation</name>
        <dbReference type="ChEBI" id="CHEBI:24875"/>
    </ligand>
</feature>
<feature type="binding site" evidence="1">
    <location>
        <begin position="132"/>
        <end position="136"/>
    </location>
    <ligand>
        <name>substrate</name>
    </ligand>
</feature>
<feature type="binding site" evidence="1">
    <location>
        <position position="165"/>
    </location>
    <ligand>
        <name>substrate</name>
    </ligand>
</feature>
<feature type="binding site" evidence="1">
    <location>
        <position position="178"/>
    </location>
    <ligand>
        <name>substrate</name>
    </ligand>
</feature>
<feature type="binding site" evidence="1">
    <location>
        <position position="271"/>
    </location>
    <ligand>
        <name>substrate</name>
    </ligand>
</feature>
<feature type="binding site" evidence="1">
    <location>
        <position position="299"/>
    </location>
    <ligand>
        <name>Fe cation</name>
        <dbReference type="ChEBI" id="CHEBI:24875"/>
    </ligand>
</feature>
<protein>
    <recommendedName>
        <fullName evidence="1">tRNA N6-adenosine threonylcarbamoyltransferase</fullName>
        <ecNumber evidence="1">2.3.1.234</ecNumber>
    </recommendedName>
    <alternativeName>
        <fullName evidence="1">N6-L-threonylcarbamoyladenine synthase</fullName>
        <shortName evidence="1">t(6)A synthase</shortName>
    </alternativeName>
    <alternativeName>
        <fullName evidence="1">t(6)A37 threonylcarbamoyladenosine biosynthesis protein TsaD</fullName>
    </alternativeName>
    <alternativeName>
        <fullName evidence="1">tRNA threonylcarbamoyladenosine biosynthesis protein TsaD</fullName>
    </alternativeName>
</protein>
<name>TSAD_NEOSM</name>
<proteinExistence type="inferred from homology"/>
<reference key="1">
    <citation type="journal article" date="2006" name="PLoS Genet.">
        <title>Comparative genomics of emerging human ehrlichiosis agents.</title>
        <authorList>
            <person name="Dunning Hotopp J.C."/>
            <person name="Lin M."/>
            <person name="Madupu R."/>
            <person name="Crabtree J."/>
            <person name="Angiuoli S.V."/>
            <person name="Eisen J.A."/>
            <person name="Seshadri R."/>
            <person name="Ren Q."/>
            <person name="Wu M."/>
            <person name="Utterback T.R."/>
            <person name="Smith S."/>
            <person name="Lewis M."/>
            <person name="Khouri H."/>
            <person name="Zhang C."/>
            <person name="Niu H."/>
            <person name="Lin Q."/>
            <person name="Ohashi N."/>
            <person name="Zhi N."/>
            <person name="Nelson W.C."/>
            <person name="Brinkac L.M."/>
            <person name="Dodson R.J."/>
            <person name="Rosovitz M.J."/>
            <person name="Sundaram J.P."/>
            <person name="Daugherty S.C."/>
            <person name="Davidsen T."/>
            <person name="Durkin A.S."/>
            <person name="Gwinn M.L."/>
            <person name="Haft D.H."/>
            <person name="Selengut J.D."/>
            <person name="Sullivan S.A."/>
            <person name="Zafar N."/>
            <person name="Zhou L."/>
            <person name="Benahmed F."/>
            <person name="Forberger H."/>
            <person name="Halpin R."/>
            <person name="Mulligan S."/>
            <person name="Robinson J."/>
            <person name="White O."/>
            <person name="Rikihisa Y."/>
            <person name="Tettelin H."/>
        </authorList>
    </citation>
    <scope>NUCLEOTIDE SEQUENCE [LARGE SCALE GENOMIC DNA]</scope>
    <source>
        <strain>ATCC VR-367 / Miyayama</strain>
    </source>
</reference>
<keyword id="KW-0012">Acyltransferase</keyword>
<keyword id="KW-0963">Cytoplasm</keyword>
<keyword id="KW-0408">Iron</keyword>
<keyword id="KW-0479">Metal-binding</keyword>
<keyword id="KW-0808">Transferase</keyword>
<keyword id="KW-0819">tRNA processing</keyword>